<gene>
    <name type="ordered locus">Nmul_A1027</name>
</gene>
<name>Y1027_NITMU</name>
<organism>
    <name type="scientific">Nitrosospira multiformis (strain ATCC 25196 / NCIMB 11849 / C 71)</name>
    <dbReference type="NCBI Taxonomy" id="323848"/>
    <lineage>
        <taxon>Bacteria</taxon>
        <taxon>Pseudomonadati</taxon>
        <taxon>Pseudomonadota</taxon>
        <taxon>Betaproteobacteria</taxon>
        <taxon>Nitrosomonadales</taxon>
        <taxon>Nitrosomonadaceae</taxon>
        <taxon>Nitrosospira</taxon>
    </lineage>
</organism>
<accession>Q2YA91</accession>
<proteinExistence type="inferred from homology"/>
<sequence length="61" mass="7076">MDPKLLDILVCPLCKSPLLYRKPENELICKADRLAFPIRDGIPIMLEDEARRLPVEEEISR</sequence>
<dbReference type="EMBL" id="CP000103">
    <property type="protein sequence ID" value="ABB74330.1"/>
    <property type="molecule type" value="Genomic_DNA"/>
</dbReference>
<dbReference type="RefSeq" id="WP_011380375.1">
    <property type="nucleotide sequence ID" value="NC_007614.1"/>
</dbReference>
<dbReference type="SMR" id="Q2YA91"/>
<dbReference type="STRING" id="323848.Nmul_A1027"/>
<dbReference type="KEGG" id="nmu:Nmul_A1027"/>
<dbReference type="eggNOG" id="COG2835">
    <property type="taxonomic scope" value="Bacteria"/>
</dbReference>
<dbReference type="HOGENOM" id="CLU_155659_3_1_4"/>
<dbReference type="OrthoDB" id="9812205at2"/>
<dbReference type="Proteomes" id="UP000002718">
    <property type="component" value="Chromosome"/>
</dbReference>
<dbReference type="GO" id="GO:0005829">
    <property type="term" value="C:cytosol"/>
    <property type="evidence" value="ECO:0007669"/>
    <property type="project" value="TreeGrafter"/>
</dbReference>
<dbReference type="FunFam" id="2.20.25.10:FF:000002">
    <property type="entry name" value="UPF0434 protein YcaR"/>
    <property type="match status" value="1"/>
</dbReference>
<dbReference type="Gene3D" id="2.20.25.10">
    <property type="match status" value="1"/>
</dbReference>
<dbReference type="HAMAP" id="MF_01187">
    <property type="entry name" value="UPF0434"/>
    <property type="match status" value="1"/>
</dbReference>
<dbReference type="InterPro" id="IPR005651">
    <property type="entry name" value="Trm112-like"/>
</dbReference>
<dbReference type="PANTHER" id="PTHR33505:SF4">
    <property type="entry name" value="PROTEIN PREY, MITOCHONDRIAL"/>
    <property type="match status" value="1"/>
</dbReference>
<dbReference type="PANTHER" id="PTHR33505">
    <property type="entry name" value="ZGC:162634"/>
    <property type="match status" value="1"/>
</dbReference>
<dbReference type="Pfam" id="PF03966">
    <property type="entry name" value="Trm112p"/>
    <property type="match status" value="1"/>
</dbReference>
<dbReference type="SUPFAM" id="SSF158997">
    <property type="entry name" value="Trm112p-like"/>
    <property type="match status" value="1"/>
</dbReference>
<protein>
    <recommendedName>
        <fullName evidence="1">UPF0434 protein Nmul_A1027</fullName>
    </recommendedName>
</protein>
<reference key="1">
    <citation type="submission" date="2005-08" db="EMBL/GenBank/DDBJ databases">
        <title>Complete sequence of chromosome 1 of Nitrosospira multiformis ATCC 25196.</title>
        <authorList>
            <person name="Copeland A."/>
            <person name="Lucas S."/>
            <person name="Lapidus A."/>
            <person name="Barry K."/>
            <person name="Detter J.C."/>
            <person name="Glavina T."/>
            <person name="Hammon N."/>
            <person name="Israni S."/>
            <person name="Pitluck S."/>
            <person name="Chain P."/>
            <person name="Malfatti S."/>
            <person name="Shin M."/>
            <person name="Vergez L."/>
            <person name="Schmutz J."/>
            <person name="Larimer F."/>
            <person name="Land M."/>
            <person name="Hauser L."/>
            <person name="Kyrpides N."/>
            <person name="Lykidis A."/>
            <person name="Richardson P."/>
        </authorList>
    </citation>
    <scope>NUCLEOTIDE SEQUENCE [LARGE SCALE GENOMIC DNA]</scope>
    <source>
        <strain>ATCC 25196 / NCIMB 11849 / C 71</strain>
    </source>
</reference>
<keyword id="KW-1185">Reference proteome</keyword>
<feature type="chain" id="PRO_0000291122" description="UPF0434 protein Nmul_A1027">
    <location>
        <begin position="1"/>
        <end position="61"/>
    </location>
</feature>
<evidence type="ECO:0000255" key="1">
    <source>
        <dbReference type="HAMAP-Rule" id="MF_01187"/>
    </source>
</evidence>
<comment type="similarity">
    <text evidence="1">Belongs to the UPF0434 family.</text>
</comment>